<dbReference type="EC" id="2.7.2.3" evidence="1"/>
<dbReference type="EMBL" id="CP000423">
    <property type="protein sequence ID" value="ABJ69766.1"/>
    <property type="molecule type" value="Genomic_DNA"/>
</dbReference>
<dbReference type="RefSeq" id="WP_003564267.1">
    <property type="nucleotide sequence ID" value="NC_008526.1"/>
</dbReference>
<dbReference type="RefSeq" id="YP_806208.1">
    <property type="nucleotide sequence ID" value="NC_008526.1"/>
</dbReference>
<dbReference type="SMR" id="Q03AK6"/>
<dbReference type="STRING" id="321967.LSEI_0968"/>
<dbReference type="PaxDb" id="321967-LSEI_0968"/>
<dbReference type="KEGG" id="lca:LSEI_0968"/>
<dbReference type="PATRIC" id="fig|321967.11.peg.938"/>
<dbReference type="HOGENOM" id="CLU_025427_0_2_9"/>
<dbReference type="UniPathway" id="UPA00109">
    <property type="reaction ID" value="UER00185"/>
</dbReference>
<dbReference type="Proteomes" id="UP000001651">
    <property type="component" value="Chromosome"/>
</dbReference>
<dbReference type="GO" id="GO:0005829">
    <property type="term" value="C:cytosol"/>
    <property type="evidence" value="ECO:0007669"/>
    <property type="project" value="TreeGrafter"/>
</dbReference>
<dbReference type="GO" id="GO:0043531">
    <property type="term" value="F:ADP binding"/>
    <property type="evidence" value="ECO:0007669"/>
    <property type="project" value="TreeGrafter"/>
</dbReference>
<dbReference type="GO" id="GO:0005524">
    <property type="term" value="F:ATP binding"/>
    <property type="evidence" value="ECO:0007669"/>
    <property type="project" value="UniProtKB-KW"/>
</dbReference>
<dbReference type="GO" id="GO:0004618">
    <property type="term" value="F:phosphoglycerate kinase activity"/>
    <property type="evidence" value="ECO:0007669"/>
    <property type="project" value="UniProtKB-UniRule"/>
</dbReference>
<dbReference type="GO" id="GO:0006094">
    <property type="term" value="P:gluconeogenesis"/>
    <property type="evidence" value="ECO:0007669"/>
    <property type="project" value="TreeGrafter"/>
</dbReference>
<dbReference type="GO" id="GO:0006096">
    <property type="term" value="P:glycolytic process"/>
    <property type="evidence" value="ECO:0007669"/>
    <property type="project" value="UniProtKB-UniRule"/>
</dbReference>
<dbReference type="CDD" id="cd00318">
    <property type="entry name" value="Phosphoglycerate_kinase"/>
    <property type="match status" value="1"/>
</dbReference>
<dbReference type="FunFam" id="3.40.50.1260:FF:000001">
    <property type="entry name" value="Phosphoglycerate kinase"/>
    <property type="match status" value="1"/>
</dbReference>
<dbReference type="FunFam" id="3.40.50.1260:FF:000008">
    <property type="entry name" value="Phosphoglycerate kinase"/>
    <property type="match status" value="1"/>
</dbReference>
<dbReference type="Gene3D" id="3.40.50.1260">
    <property type="entry name" value="Phosphoglycerate kinase, N-terminal domain"/>
    <property type="match status" value="2"/>
</dbReference>
<dbReference type="HAMAP" id="MF_00145">
    <property type="entry name" value="Phosphoglyc_kinase"/>
    <property type="match status" value="1"/>
</dbReference>
<dbReference type="InterPro" id="IPR001576">
    <property type="entry name" value="Phosphoglycerate_kinase"/>
</dbReference>
<dbReference type="InterPro" id="IPR015911">
    <property type="entry name" value="Phosphoglycerate_kinase_CS"/>
</dbReference>
<dbReference type="InterPro" id="IPR015824">
    <property type="entry name" value="Phosphoglycerate_kinase_N"/>
</dbReference>
<dbReference type="InterPro" id="IPR036043">
    <property type="entry name" value="Phosphoglycerate_kinase_sf"/>
</dbReference>
<dbReference type="PANTHER" id="PTHR11406">
    <property type="entry name" value="PHOSPHOGLYCERATE KINASE"/>
    <property type="match status" value="1"/>
</dbReference>
<dbReference type="PANTHER" id="PTHR11406:SF23">
    <property type="entry name" value="PHOSPHOGLYCERATE KINASE 1, CHLOROPLASTIC-RELATED"/>
    <property type="match status" value="1"/>
</dbReference>
<dbReference type="Pfam" id="PF00162">
    <property type="entry name" value="PGK"/>
    <property type="match status" value="1"/>
</dbReference>
<dbReference type="PIRSF" id="PIRSF000724">
    <property type="entry name" value="Pgk"/>
    <property type="match status" value="1"/>
</dbReference>
<dbReference type="PRINTS" id="PR00477">
    <property type="entry name" value="PHGLYCKINASE"/>
</dbReference>
<dbReference type="SUPFAM" id="SSF53748">
    <property type="entry name" value="Phosphoglycerate kinase"/>
    <property type="match status" value="1"/>
</dbReference>
<dbReference type="PROSITE" id="PS00111">
    <property type="entry name" value="PGLYCERATE_KINASE"/>
    <property type="match status" value="1"/>
</dbReference>
<keyword id="KW-0067">ATP-binding</keyword>
<keyword id="KW-0963">Cytoplasm</keyword>
<keyword id="KW-0324">Glycolysis</keyword>
<keyword id="KW-0418">Kinase</keyword>
<keyword id="KW-0547">Nucleotide-binding</keyword>
<keyword id="KW-1185">Reference proteome</keyword>
<keyword id="KW-0808">Transferase</keyword>
<gene>
    <name evidence="1" type="primary">pgk</name>
    <name type="ordered locus">LSEI_0968</name>
</gene>
<comment type="catalytic activity">
    <reaction evidence="1">
        <text>(2R)-3-phosphoglycerate + ATP = (2R)-3-phospho-glyceroyl phosphate + ADP</text>
        <dbReference type="Rhea" id="RHEA:14801"/>
        <dbReference type="ChEBI" id="CHEBI:30616"/>
        <dbReference type="ChEBI" id="CHEBI:57604"/>
        <dbReference type="ChEBI" id="CHEBI:58272"/>
        <dbReference type="ChEBI" id="CHEBI:456216"/>
        <dbReference type="EC" id="2.7.2.3"/>
    </reaction>
</comment>
<comment type="pathway">
    <text evidence="1">Carbohydrate degradation; glycolysis; pyruvate from D-glyceraldehyde 3-phosphate: step 2/5.</text>
</comment>
<comment type="subunit">
    <text evidence="1">Monomer.</text>
</comment>
<comment type="subcellular location">
    <subcellularLocation>
        <location evidence="1">Cytoplasm</location>
    </subcellularLocation>
</comment>
<comment type="similarity">
    <text evidence="1">Belongs to the phosphoglycerate kinase family.</text>
</comment>
<reference key="1">
    <citation type="journal article" date="2006" name="Proc. Natl. Acad. Sci. U.S.A.">
        <title>Comparative genomics of the lactic acid bacteria.</title>
        <authorList>
            <person name="Makarova K.S."/>
            <person name="Slesarev A."/>
            <person name="Wolf Y.I."/>
            <person name="Sorokin A."/>
            <person name="Mirkin B."/>
            <person name="Koonin E.V."/>
            <person name="Pavlov A."/>
            <person name="Pavlova N."/>
            <person name="Karamychev V."/>
            <person name="Polouchine N."/>
            <person name="Shakhova V."/>
            <person name="Grigoriev I."/>
            <person name="Lou Y."/>
            <person name="Rohksar D."/>
            <person name="Lucas S."/>
            <person name="Huang K."/>
            <person name="Goodstein D.M."/>
            <person name="Hawkins T."/>
            <person name="Plengvidhya V."/>
            <person name="Welker D."/>
            <person name="Hughes J."/>
            <person name="Goh Y."/>
            <person name="Benson A."/>
            <person name="Baldwin K."/>
            <person name="Lee J.-H."/>
            <person name="Diaz-Muniz I."/>
            <person name="Dosti B."/>
            <person name="Smeianov V."/>
            <person name="Wechter W."/>
            <person name="Barabote R."/>
            <person name="Lorca G."/>
            <person name="Altermann E."/>
            <person name="Barrangou R."/>
            <person name="Ganesan B."/>
            <person name="Xie Y."/>
            <person name="Rawsthorne H."/>
            <person name="Tamir D."/>
            <person name="Parker C."/>
            <person name="Breidt F."/>
            <person name="Broadbent J.R."/>
            <person name="Hutkins R."/>
            <person name="O'Sullivan D."/>
            <person name="Steele J."/>
            <person name="Unlu G."/>
            <person name="Saier M.H. Jr."/>
            <person name="Klaenhammer T."/>
            <person name="Richardson P."/>
            <person name="Kozyavkin S."/>
            <person name="Weimer B.C."/>
            <person name="Mills D.A."/>
        </authorList>
    </citation>
    <scope>NUCLEOTIDE SEQUENCE [LARGE SCALE GENOMIC DNA]</scope>
    <source>
        <strain>ATCC 334 / BCRC 17002 / CCUG 31169 / CIP 107868 / KCTC 3260 / NRRL B-441</strain>
    </source>
</reference>
<protein>
    <recommendedName>
        <fullName evidence="1">Phosphoglycerate kinase</fullName>
        <ecNumber evidence="1">2.7.2.3</ecNumber>
    </recommendedName>
</protein>
<name>PGK_LACP3</name>
<evidence type="ECO:0000255" key="1">
    <source>
        <dbReference type="HAMAP-Rule" id="MF_00145"/>
    </source>
</evidence>
<sequence>MAKLIVSDLDVKDKKVLIRVDFNVPIKDGVIGDDNRIVAALPTIQYVIDHGGKAILLSHLGRVKTEEDKAKLTLKPVAERLSELLKKPVTFVPATRGKELEDAINKMNDGDVLVMENTRFEDLDGKKESGNDPELGKYWASLGDLFVNDAFGTAHRSHASNVGIASNMKQTAAGFLMEKEIKFLGDAVDNPKHPFIAILGGAKVSDKIGVIENLVPKADKILIGGGMTYTFYAAKGMSIGKSLVEKDKIELAKKIMDQAGDKLLLPVDSVVATEFSNDAPHKVVDGDIPDGYMALDIGPKTIKEFKDALQGAKTVVWNGPMGVFEMSNYAEGTLEVGRALGDLKDATTIIGGGDSTAAAKQLGIAPKITHISTGGGASLEYLEGKTLPGIAAISDK</sequence>
<accession>Q03AK6</accession>
<organism>
    <name type="scientific">Lacticaseibacillus paracasei (strain ATCC 334 / BCRC 17002 / CCUG 31169 / CIP 107868 / KCTC 3260 / NRRL B-441)</name>
    <name type="common">Lactobacillus paracasei</name>
    <dbReference type="NCBI Taxonomy" id="321967"/>
    <lineage>
        <taxon>Bacteria</taxon>
        <taxon>Bacillati</taxon>
        <taxon>Bacillota</taxon>
        <taxon>Bacilli</taxon>
        <taxon>Lactobacillales</taxon>
        <taxon>Lactobacillaceae</taxon>
        <taxon>Lacticaseibacillus</taxon>
    </lineage>
</organism>
<proteinExistence type="inferred from homology"/>
<feature type="chain" id="PRO_1000009619" description="Phosphoglycerate kinase">
    <location>
        <begin position="1"/>
        <end position="396"/>
    </location>
</feature>
<feature type="binding site" evidence="1">
    <location>
        <begin position="21"/>
        <end position="23"/>
    </location>
    <ligand>
        <name>substrate</name>
    </ligand>
</feature>
<feature type="binding site" evidence="1">
    <location>
        <position position="36"/>
    </location>
    <ligand>
        <name>substrate</name>
    </ligand>
</feature>
<feature type="binding site" evidence="1">
    <location>
        <begin position="59"/>
        <end position="62"/>
    </location>
    <ligand>
        <name>substrate</name>
    </ligand>
</feature>
<feature type="binding site" evidence="1">
    <location>
        <position position="119"/>
    </location>
    <ligand>
        <name>substrate</name>
    </ligand>
</feature>
<feature type="binding site" evidence="1">
    <location>
        <position position="156"/>
    </location>
    <ligand>
        <name>substrate</name>
    </ligand>
</feature>
<feature type="binding site" evidence="1">
    <location>
        <position position="207"/>
    </location>
    <ligand>
        <name>ATP</name>
        <dbReference type="ChEBI" id="CHEBI:30616"/>
    </ligand>
</feature>
<feature type="binding site" evidence="1">
    <location>
        <position position="325"/>
    </location>
    <ligand>
        <name>ATP</name>
        <dbReference type="ChEBI" id="CHEBI:30616"/>
    </ligand>
</feature>
<feature type="binding site" evidence="1">
    <location>
        <begin position="352"/>
        <end position="355"/>
    </location>
    <ligand>
        <name>ATP</name>
        <dbReference type="ChEBI" id="CHEBI:30616"/>
    </ligand>
</feature>